<accession>Q2P135</accession>
<proteinExistence type="inferred from homology"/>
<name>FETP_XANOM</name>
<dbReference type="EMBL" id="AP008229">
    <property type="protein sequence ID" value="BAE69742.1"/>
    <property type="molecule type" value="Genomic_DNA"/>
</dbReference>
<dbReference type="RefSeq" id="WP_011409017.1">
    <property type="nucleotide sequence ID" value="NC_007705.1"/>
</dbReference>
<dbReference type="SMR" id="Q2P135"/>
<dbReference type="KEGG" id="xom:XOO2987"/>
<dbReference type="HOGENOM" id="CLU_170994_0_0_6"/>
<dbReference type="GO" id="GO:0005829">
    <property type="term" value="C:cytosol"/>
    <property type="evidence" value="ECO:0007669"/>
    <property type="project" value="TreeGrafter"/>
</dbReference>
<dbReference type="GO" id="GO:0005506">
    <property type="term" value="F:iron ion binding"/>
    <property type="evidence" value="ECO:0007669"/>
    <property type="project" value="UniProtKB-UniRule"/>
</dbReference>
<dbReference type="GO" id="GO:0034599">
    <property type="term" value="P:cellular response to oxidative stress"/>
    <property type="evidence" value="ECO:0007669"/>
    <property type="project" value="TreeGrafter"/>
</dbReference>
<dbReference type="FunFam" id="1.10.3880.10:FF:000001">
    <property type="entry name" value="Probable Fe(2+)-trafficking protein"/>
    <property type="match status" value="1"/>
</dbReference>
<dbReference type="Gene3D" id="1.10.3880.10">
    <property type="entry name" value="Fe(II) trafficking protein YggX"/>
    <property type="match status" value="1"/>
</dbReference>
<dbReference type="HAMAP" id="MF_00686">
    <property type="entry name" value="Fe_traffic_YggX"/>
    <property type="match status" value="1"/>
</dbReference>
<dbReference type="InterPro" id="IPR007457">
    <property type="entry name" value="Fe_traffick_prot_YggX"/>
</dbReference>
<dbReference type="InterPro" id="IPR036766">
    <property type="entry name" value="Fe_traffick_prot_YggX_sf"/>
</dbReference>
<dbReference type="NCBIfam" id="NF003817">
    <property type="entry name" value="PRK05408.1"/>
    <property type="match status" value="1"/>
</dbReference>
<dbReference type="PANTHER" id="PTHR36965">
    <property type="entry name" value="FE(2+)-TRAFFICKING PROTEIN-RELATED"/>
    <property type="match status" value="1"/>
</dbReference>
<dbReference type="PANTHER" id="PTHR36965:SF1">
    <property type="entry name" value="FE(2+)-TRAFFICKING PROTEIN-RELATED"/>
    <property type="match status" value="1"/>
</dbReference>
<dbReference type="Pfam" id="PF04362">
    <property type="entry name" value="Iron_traffic"/>
    <property type="match status" value="1"/>
</dbReference>
<dbReference type="PIRSF" id="PIRSF029827">
    <property type="entry name" value="Fe_traffic_YggX"/>
    <property type="match status" value="1"/>
</dbReference>
<dbReference type="SUPFAM" id="SSF111148">
    <property type="entry name" value="YggX-like"/>
    <property type="match status" value="1"/>
</dbReference>
<protein>
    <recommendedName>
        <fullName evidence="1">Probable Fe(2+)-trafficking protein</fullName>
    </recommendedName>
</protein>
<comment type="function">
    <text evidence="1">Could be a mediator in iron transactions between iron acquisition and iron-requiring processes, such as synthesis and/or repair of Fe-S clusters in biosynthetic enzymes.</text>
</comment>
<comment type="similarity">
    <text evidence="1">Belongs to the Fe(2+)-trafficking protein family.</text>
</comment>
<organism>
    <name type="scientific">Xanthomonas oryzae pv. oryzae (strain MAFF 311018)</name>
    <dbReference type="NCBI Taxonomy" id="342109"/>
    <lineage>
        <taxon>Bacteria</taxon>
        <taxon>Pseudomonadati</taxon>
        <taxon>Pseudomonadota</taxon>
        <taxon>Gammaproteobacteria</taxon>
        <taxon>Lysobacterales</taxon>
        <taxon>Lysobacteraceae</taxon>
        <taxon>Xanthomonas</taxon>
    </lineage>
</organism>
<reference key="1">
    <citation type="journal article" date="2005" name="Jpn. Agric. Res. Q.">
        <title>Genome sequence of Xanthomonas oryzae pv. oryzae suggests contribution of large numbers of effector genes and insertion sequences to its race diversity.</title>
        <authorList>
            <person name="Ochiai H."/>
            <person name="Inoue Y."/>
            <person name="Takeya M."/>
            <person name="Sasaki A."/>
            <person name="Kaku H."/>
        </authorList>
    </citation>
    <scope>NUCLEOTIDE SEQUENCE [LARGE SCALE GENOMIC DNA]</scope>
    <source>
        <strain>MAFF 311018</strain>
    </source>
</reference>
<feature type="chain" id="PRO_0000246124" description="Probable Fe(2+)-trafficking protein">
    <location>
        <begin position="1"/>
        <end position="92"/>
    </location>
</feature>
<evidence type="ECO:0000255" key="1">
    <source>
        <dbReference type="HAMAP-Rule" id="MF_00686"/>
    </source>
</evidence>
<gene>
    <name type="ordered locus">XOO2987</name>
</gene>
<keyword id="KW-0408">Iron</keyword>
<sequence length="92" mass="10661">MSRTVFCHYQQSDAEGLDFVPYPGELGQRIFAHIGKTAWQAWLAHQTMLINENRLSPRDPKHRAFLETELQKFLFERNADKPDGYVAPLGEE</sequence>